<comment type="catalytic activity">
    <reaction evidence="1">
        <text>tRNA(Phe) + L-phenylalanine + ATP = L-phenylalanyl-tRNA(Phe) + AMP + diphosphate + H(+)</text>
        <dbReference type="Rhea" id="RHEA:19413"/>
        <dbReference type="Rhea" id="RHEA-COMP:9668"/>
        <dbReference type="Rhea" id="RHEA-COMP:9699"/>
        <dbReference type="ChEBI" id="CHEBI:15378"/>
        <dbReference type="ChEBI" id="CHEBI:30616"/>
        <dbReference type="ChEBI" id="CHEBI:33019"/>
        <dbReference type="ChEBI" id="CHEBI:58095"/>
        <dbReference type="ChEBI" id="CHEBI:78442"/>
        <dbReference type="ChEBI" id="CHEBI:78531"/>
        <dbReference type="ChEBI" id="CHEBI:456215"/>
        <dbReference type="EC" id="6.1.1.20"/>
    </reaction>
</comment>
<comment type="cofactor">
    <cofactor evidence="1">
        <name>Mg(2+)</name>
        <dbReference type="ChEBI" id="CHEBI:18420"/>
    </cofactor>
    <text evidence="1">Binds 2 magnesium ions per tetramer.</text>
</comment>
<comment type="subunit">
    <text evidence="1">Tetramer of two alpha and two beta subunits.</text>
</comment>
<comment type="subcellular location">
    <subcellularLocation>
        <location evidence="1">Cytoplasm</location>
    </subcellularLocation>
</comment>
<comment type="similarity">
    <text evidence="1">Belongs to the class-II aminoacyl-tRNA synthetase family. Phe-tRNA synthetase alpha subunit type 1 subfamily.</text>
</comment>
<evidence type="ECO:0000255" key="1">
    <source>
        <dbReference type="HAMAP-Rule" id="MF_00281"/>
    </source>
</evidence>
<proteinExistence type="inferred from homology"/>
<dbReference type="EC" id="6.1.1.20" evidence="1"/>
<dbReference type="EMBL" id="BX640431">
    <property type="protein sequence ID" value="CAE37890.1"/>
    <property type="molecule type" value="Genomic_DNA"/>
</dbReference>
<dbReference type="SMR" id="Q7W7C7"/>
<dbReference type="KEGG" id="bpa:BPP2598"/>
<dbReference type="HOGENOM" id="CLU_025086_0_1_4"/>
<dbReference type="Proteomes" id="UP000001421">
    <property type="component" value="Chromosome"/>
</dbReference>
<dbReference type="GO" id="GO:0005737">
    <property type="term" value="C:cytoplasm"/>
    <property type="evidence" value="ECO:0007669"/>
    <property type="project" value="UniProtKB-SubCell"/>
</dbReference>
<dbReference type="GO" id="GO:0005524">
    <property type="term" value="F:ATP binding"/>
    <property type="evidence" value="ECO:0007669"/>
    <property type="project" value="UniProtKB-UniRule"/>
</dbReference>
<dbReference type="GO" id="GO:0000287">
    <property type="term" value="F:magnesium ion binding"/>
    <property type="evidence" value="ECO:0007669"/>
    <property type="project" value="UniProtKB-UniRule"/>
</dbReference>
<dbReference type="GO" id="GO:0004826">
    <property type="term" value="F:phenylalanine-tRNA ligase activity"/>
    <property type="evidence" value="ECO:0007669"/>
    <property type="project" value="UniProtKB-UniRule"/>
</dbReference>
<dbReference type="GO" id="GO:0000049">
    <property type="term" value="F:tRNA binding"/>
    <property type="evidence" value="ECO:0007669"/>
    <property type="project" value="InterPro"/>
</dbReference>
<dbReference type="GO" id="GO:0006432">
    <property type="term" value="P:phenylalanyl-tRNA aminoacylation"/>
    <property type="evidence" value="ECO:0007669"/>
    <property type="project" value="UniProtKB-UniRule"/>
</dbReference>
<dbReference type="CDD" id="cd00496">
    <property type="entry name" value="PheRS_alpha_core"/>
    <property type="match status" value="1"/>
</dbReference>
<dbReference type="FunFam" id="3.30.930.10:FF:000003">
    <property type="entry name" value="Phenylalanine--tRNA ligase alpha subunit"/>
    <property type="match status" value="1"/>
</dbReference>
<dbReference type="Gene3D" id="3.30.930.10">
    <property type="entry name" value="Bira Bifunctional Protein, Domain 2"/>
    <property type="match status" value="1"/>
</dbReference>
<dbReference type="HAMAP" id="MF_00281">
    <property type="entry name" value="Phe_tRNA_synth_alpha1"/>
    <property type="match status" value="1"/>
</dbReference>
<dbReference type="InterPro" id="IPR006195">
    <property type="entry name" value="aa-tRNA-synth_II"/>
</dbReference>
<dbReference type="InterPro" id="IPR045864">
    <property type="entry name" value="aa-tRNA-synth_II/BPL/LPL"/>
</dbReference>
<dbReference type="InterPro" id="IPR004529">
    <property type="entry name" value="Phe-tRNA-synth_IIc_asu"/>
</dbReference>
<dbReference type="InterPro" id="IPR004188">
    <property type="entry name" value="Phe-tRNA_ligase_II_N"/>
</dbReference>
<dbReference type="InterPro" id="IPR022911">
    <property type="entry name" value="Phe_tRNA_ligase_alpha1_bac"/>
</dbReference>
<dbReference type="InterPro" id="IPR002319">
    <property type="entry name" value="Phenylalanyl-tRNA_Synthase"/>
</dbReference>
<dbReference type="InterPro" id="IPR010978">
    <property type="entry name" value="tRNA-bd_arm"/>
</dbReference>
<dbReference type="NCBIfam" id="TIGR00468">
    <property type="entry name" value="pheS"/>
    <property type="match status" value="1"/>
</dbReference>
<dbReference type="PANTHER" id="PTHR11538:SF41">
    <property type="entry name" value="PHENYLALANINE--TRNA LIGASE, MITOCHONDRIAL"/>
    <property type="match status" value="1"/>
</dbReference>
<dbReference type="PANTHER" id="PTHR11538">
    <property type="entry name" value="PHENYLALANYL-TRNA SYNTHETASE"/>
    <property type="match status" value="1"/>
</dbReference>
<dbReference type="Pfam" id="PF02912">
    <property type="entry name" value="Phe_tRNA-synt_N"/>
    <property type="match status" value="1"/>
</dbReference>
<dbReference type="Pfam" id="PF01409">
    <property type="entry name" value="tRNA-synt_2d"/>
    <property type="match status" value="1"/>
</dbReference>
<dbReference type="SUPFAM" id="SSF55681">
    <property type="entry name" value="Class II aaRS and biotin synthetases"/>
    <property type="match status" value="1"/>
</dbReference>
<dbReference type="SUPFAM" id="SSF46589">
    <property type="entry name" value="tRNA-binding arm"/>
    <property type="match status" value="1"/>
</dbReference>
<dbReference type="PROSITE" id="PS50862">
    <property type="entry name" value="AA_TRNA_LIGASE_II"/>
    <property type="match status" value="1"/>
</dbReference>
<name>SYFA_BORPA</name>
<keyword id="KW-0030">Aminoacyl-tRNA synthetase</keyword>
<keyword id="KW-0067">ATP-binding</keyword>
<keyword id="KW-0963">Cytoplasm</keyword>
<keyword id="KW-0436">Ligase</keyword>
<keyword id="KW-0460">Magnesium</keyword>
<keyword id="KW-0479">Metal-binding</keyword>
<keyword id="KW-0547">Nucleotide-binding</keyword>
<keyword id="KW-0648">Protein biosynthesis</keyword>
<reference key="1">
    <citation type="journal article" date="2003" name="Nat. Genet.">
        <title>Comparative analysis of the genome sequences of Bordetella pertussis, Bordetella parapertussis and Bordetella bronchiseptica.</title>
        <authorList>
            <person name="Parkhill J."/>
            <person name="Sebaihia M."/>
            <person name="Preston A."/>
            <person name="Murphy L.D."/>
            <person name="Thomson N.R."/>
            <person name="Harris D.E."/>
            <person name="Holden M.T.G."/>
            <person name="Churcher C.M."/>
            <person name="Bentley S.D."/>
            <person name="Mungall K.L."/>
            <person name="Cerdeno-Tarraga A.-M."/>
            <person name="Temple L."/>
            <person name="James K.D."/>
            <person name="Harris B."/>
            <person name="Quail M.A."/>
            <person name="Achtman M."/>
            <person name="Atkin R."/>
            <person name="Baker S."/>
            <person name="Basham D."/>
            <person name="Bason N."/>
            <person name="Cherevach I."/>
            <person name="Chillingworth T."/>
            <person name="Collins M."/>
            <person name="Cronin A."/>
            <person name="Davis P."/>
            <person name="Doggett J."/>
            <person name="Feltwell T."/>
            <person name="Goble A."/>
            <person name="Hamlin N."/>
            <person name="Hauser H."/>
            <person name="Holroyd S."/>
            <person name="Jagels K."/>
            <person name="Leather S."/>
            <person name="Moule S."/>
            <person name="Norberczak H."/>
            <person name="O'Neil S."/>
            <person name="Ormond D."/>
            <person name="Price C."/>
            <person name="Rabbinowitsch E."/>
            <person name="Rutter S."/>
            <person name="Sanders M."/>
            <person name="Saunders D."/>
            <person name="Seeger K."/>
            <person name="Sharp S."/>
            <person name="Simmonds M."/>
            <person name="Skelton J."/>
            <person name="Squares R."/>
            <person name="Squares S."/>
            <person name="Stevens K."/>
            <person name="Unwin L."/>
            <person name="Whitehead S."/>
            <person name="Barrell B.G."/>
            <person name="Maskell D.J."/>
        </authorList>
    </citation>
    <scope>NUCLEOTIDE SEQUENCE [LARGE SCALE GENOMIC DNA]</scope>
    <source>
        <strain>12822 / ATCC BAA-587 / NCTC 13253</strain>
    </source>
</reference>
<sequence>MRFEGSNSMTLLVDDLVSQAQERFAAASDAAALENAKARFLGKEGALTVLLKALGKLDPEQKREMGARINQAKQQIEALLNARRAALAQAELDARLASETIDVTLPGRGKAAGGIHPVIRTWERVEEIFRSIGFDVADGPEVENDWTNFTALNNPLDHPARSMQDTFYVDMHDADGLPLLLRTHTSPMQVRYARMHKPPIKVIAPGRTYRVDSGATHSPMFHQVEGLWIAEDISFADLKGVYTDFLRCFFESDDLVVRFRPSFFPFTEPSAEIDMMFTSGPNRGRWLEISGSGQVHPQVVRNFGLDPERYIGFAFGSGLERLTMLRYGVNDLRQFYEGDLRFLRQFNE</sequence>
<accession>Q7W7C7</accession>
<gene>
    <name evidence="1" type="primary">pheS</name>
    <name type="ordered locus">BPP2598</name>
</gene>
<organism>
    <name type="scientific">Bordetella parapertussis (strain 12822 / ATCC BAA-587 / NCTC 13253)</name>
    <dbReference type="NCBI Taxonomy" id="257311"/>
    <lineage>
        <taxon>Bacteria</taxon>
        <taxon>Pseudomonadati</taxon>
        <taxon>Pseudomonadota</taxon>
        <taxon>Betaproteobacteria</taxon>
        <taxon>Burkholderiales</taxon>
        <taxon>Alcaligenaceae</taxon>
        <taxon>Bordetella</taxon>
    </lineage>
</organism>
<feature type="chain" id="PRO_0000126671" description="Phenylalanine--tRNA ligase alpha subunit">
    <location>
        <begin position="1"/>
        <end position="348"/>
    </location>
</feature>
<feature type="binding site" evidence="1">
    <location>
        <position position="268"/>
    </location>
    <ligand>
        <name>Mg(2+)</name>
        <dbReference type="ChEBI" id="CHEBI:18420"/>
        <note>shared with beta subunit</note>
    </ligand>
</feature>
<protein>
    <recommendedName>
        <fullName evidence="1">Phenylalanine--tRNA ligase alpha subunit</fullName>
        <ecNumber evidence="1">6.1.1.20</ecNumber>
    </recommendedName>
    <alternativeName>
        <fullName evidence="1">Phenylalanyl-tRNA synthetase alpha subunit</fullName>
        <shortName evidence="1">PheRS</shortName>
    </alternativeName>
</protein>